<gene>
    <name evidence="1" type="primary">fdhD</name>
    <name evidence="4" type="synonym">fdsC</name>
    <name type="ordered locus">H16_A0643</name>
</gene>
<comment type="function">
    <text evidence="1">Required for formate dehydrogenase (FDH) activity. Acts as a sulfur carrier protein that transfers sulfur from IscS to the molybdenum cofactor prior to its insertion into FDH.</text>
</comment>
<comment type="subcellular location">
    <subcellularLocation>
        <location evidence="1">Cytoplasm</location>
    </subcellularLocation>
</comment>
<comment type="induction">
    <text evidence="3">Induced by formate.</text>
</comment>
<comment type="similarity">
    <text evidence="1">Belongs to the FdhD family.</text>
</comment>
<proteinExistence type="evidence at transcript level"/>
<keyword id="KW-0963">Cytoplasm</keyword>
<keyword id="KW-0501">Molybdenum cofactor biosynthesis</keyword>
<keyword id="KW-1185">Reference proteome</keyword>
<dbReference type="EMBL" id="AJ223295">
    <property type="protein sequence ID" value="CAA11236.2"/>
    <property type="molecule type" value="Genomic_DNA"/>
</dbReference>
<dbReference type="EMBL" id="AM260479">
    <property type="protein sequence ID" value="CAJ91791.1"/>
    <property type="molecule type" value="Genomic_DNA"/>
</dbReference>
<dbReference type="SMR" id="O87816"/>
<dbReference type="STRING" id="381666.H16_A0643"/>
<dbReference type="KEGG" id="reh:H16_A0643"/>
<dbReference type="eggNOG" id="COG1526">
    <property type="taxonomic scope" value="Bacteria"/>
</dbReference>
<dbReference type="HOGENOM" id="CLU_056887_2_0_4"/>
<dbReference type="OrthoDB" id="3197277at2"/>
<dbReference type="Proteomes" id="UP000008210">
    <property type="component" value="Chromosome 1"/>
</dbReference>
<dbReference type="GO" id="GO:0005737">
    <property type="term" value="C:cytoplasm"/>
    <property type="evidence" value="ECO:0007669"/>
    <property type="project" value="UniProtKB-SubCell"/>
</dbReference>
<dbReference type="GO" id="GO:0097163">
    <property type="term" value="F:sulfur carrier activity"/>
    <property type="evidence" value="ECO:0007669"/>
    <property type="project" value="UniProtKB-UniRule"/>
</dbReference>
<dbReference type="GO" id="GO:0016783">
    <property type="term" value="F:sulfurtransferase activity"/>
    <property type="evidence" value="ECO:0007669"/>
    <property type="project" value="InterPro"/>
</dbReference>
<dbReference type="GO" id="GO:0006777">
    <property type="term" value="P:Mo-molybdopterin cofactor biosynthetic process"/>
    <property type="evidence" value="ECO:0007669"/>
    <property type="project" value="UniProtKB-UniRule"/>
</dbReference>
<dbReference type="Gene3D" id="3.10.20.10">
    <property type="match status" value="1"/>
</dbReference>
<dbReference type="Gene3D" id="3.40.140.10">
    <property type="entry name" value="Cytidine Deaminase, domain 2"/>
    <property type="match status" value="1"/>
</dbReference>
<dbReference type="HAMAP" id="MF_00187">
    <property type="entry name" value="FdhD"/>
    <property type="match status" value="1"/>
</dbReference>
<dbReference type="InterPro" id="IPR016193">
    <property type="entry name" value="Cytidine_deaminase-like"/>
</dbReference>
<dbReference type="InterPro" id="IPR003786">
    <property type="entry name" value="FdhD"/>
</dbReference>
<dbReference type="NCBIfam" id="TIGR00129">
    <property type="entry name" value="fdhD_narQ"/>
    <property type="match status" value="1"/>
</dbReference>
<dbReference type="PANTHER" id="PTHR30592">
    <property type="entry name" value="FORMATE DEHYDROGENASE"/>
    <property type="match status" value="1"/>
</dbReference>
<dbReference type="PANTHER" id="PTHR30592:SF1">
    <property type="entry name" value="SULFUR CARRIER PROTEIN FDHD"/>
    <property type="match status" value="1"/>
</dbReference>
<dbReference type="Pfam" id="PF02634">
    <property type="entry name" value="FdhD-NarQ"/>
    <property type="match status" value="1"/>
</dbReference>
<dbReference type="PIRSF" id="PIRSF015626">
    <property type="entry name" value="FdhD"/>
    <property type="match status" value="1"/>
</dbReference>
<dbReference type="SUPFAM" id="SSF53927">
    <property type="entry name" value="Cytidine deaminase-like"/>
    <property type="match status" value="1"/>
</dbReference>
<organism>
    <name type="scientific">Cupriavidus necator (strain ATCC 17699 / DSM 428 / KCTC 22496 / NCIMB 10442 / H16 / Stanier 337)</name>
    <name type="common">Ralstonia eutropha</name>
    <dbReference type="NCBI Taxonomy" id="381666"/>
    <lineage>
        <taxon>Bacteria</taxon>
        <taxon>Pseudomonadati</taxon>
        <taxon>Pseudomonadota</taxon>
        <taxon>Betaproteobacteria</taxon>
        <taxon>Burkholderiales</taxon>
        <taxon>Burkholderiaceae</taxon>
        <taxon>Cupriavidus</taxon>
    </lineage>
</organism>
<protein>
    <recommendedName>
        <fullName evidence="1">Sulfur carrier protein FdhD</fullName>
    </recommendedName>
</protein>
<sequence>MMRCMQSPEVHPAAAGDAEPPTHSTFAVSRWRRGELMLSPDEVAEEVPVALVYNGISHAVMLATPADLEDFALGFSLSEGIVTRASDVYDIEIDTREHGIAVQLEIASEAFMRLKDRRRSLAGRTGCGLCGTESLEQVMRLPAPVRSDASFHTDVIQAAFVQLQLRQELQQHTGATHAAAWLRADGHVSLVREDVGRHNALDKLAGALASSGEDISSGAVLVTSRASYEMVLKTAAIGAGVLAAVSAPTALAVRLAEQASITLAGFVRAGAHVVYAHPQRLQHEASLA</sequence>
<reference key="1">
    <citation type="journal article" date="1998" name="J. Biol. Chem.">
        <title>Structural analysis of the fds operon encoding the NAD+-linked formate dehydrogenase of Ralstonia eutropha.</title>
        <authorList>
            <person name="Oh J.I."/>
            <person name="Bowien B."/>
        </authorList>
    </citation>
    <scope>NUCLEOTIDE SEQUENCE [GENOMIC DNA]</scope>
    <scope>INDUCTION</scope>
    <source>
        <strain>ATCC 17699 / DSM 428 / KCTC 22496 / NCIMB 10442 / H16 / Stanier 337</strain>
    </source>
</reference>
<reference key="2">
    <citation type="submission" date="2000-04" db="EMBL/GenBank/DDBJ databases">
        <authorList>
            <person name="Bowien B."/>
        </authorList>
    </citation>
    <scope>SEQUENCE REVISION</scope>
</reference>
<reference key="3">
    <citation type="journal article" date="2006" name="Nat. Biotechnol.">
        <title>Genome sequence of the bioplastic-producing 'Knallgas' bacterium Ralstonia eutropha H16.</title>
        <authorList>
            <person name="Pohlmann A."/>
            <person name="Fricke W.F."/>
            <person name="Reinecke F."/>
            <person name="Kusian B."/>
            <person name="Liesegang H."/>
            <person name="Cramm R."/>
            <person name="Eitinger T."/>
            <person name="Ewering C."/>
            <person name="Poetter M."/>
            <person name="Schwartz E."/>
            <person name="Strittmatter A."/>
            <person name="Voss I."/>
            <person name="Gottschalk G."/>
            <person name="Steinbuechel A."/>
            <person name="Friedrich B."/>
            <person name="Bowien B."/>
        </authorList>
    </citation>
    <scope>NUCLEOTIDE SEQUENCE [LARGE SCALE GENOMIC DNA]</scope>
    <source>
        <strain>ATCC 17699 / DSM 428 / KCTC 22496 / NCIMB 10442 / H16 / Stanier 337</strain>
    </source>
</reference>
<name>FDHD_CUPNH</name>
<accession>O87816</accession>
<accession>Q0KDY0</accession>
<evidence type="ECO:0000255" key="1">
    <source>
        <dbReference type="HAMAP-Rule" id="MF_00187"/>
    </source>
</evidence>
<evidence type="ECO:0000256" key="2">
    <source>
        <dbReference type="SAM" id="MobiDB-lite"/>
    </source>
</evidence>
<evidence type="ECO:0000269" key="3">
    <source>
    </source>
</evidence>
<evidence type="ECO:0000303" key="4">
    <source>
    </source>
</evidence>
<feature type="chain" id="PRO_0000152886" description="Sulfur carrier protein FdhD">
    <location>
        <begin position="1"/>
        <end position="288"/>
    </location>
</feature>
<feature type="region of interest" description="Disordered" evidence="2">
    <location>
        <begin position="1"/>
        <end position="23"/>
    </location>
</feature>
<feature type="active site" description="Cysteine persulfide intermediate" evidence="1">
    <location>
        <position position="127"/>
    </location>
</feature>